<name>3HAO_CAEBR</name>
<protein>
    <recommendedName>
        <fullName evidence="1">3-hydroxyanthranilate 3,4-dioxygenase</fullName>
        <ecNumber evidence="1">1.13.11.6</ecNumber>
    </recommendedName>
    <alternativeName>
        <fullName evidence="1">3-hydroxyanthranilate oxygenase</fullName>
        <shortName evidence="1">3-HAO</shortName>
    </alternativeName>
    <alternativeName>
        <fullName evidence="1">3-hydroxyanthranilic acid dioxygenase</fullName>
        <shortName evidence="1">HAD</shortName>
    </alternativeName>
</protein>
<accession>Q60W34</accession>
<accession>A8XV97</accession>
<evidence type="ECO:0000255" key="1">
    <source>
        <dbReference type="HAMAP-Rule" id="MF_03019"/>
    </source>
</evidence>
<reference key="1">
    <citation type="journal article" date="2003" name="PLoS Biol.">
        <title>The genome sequence of Caenorhabditis briggsae: a platform for comparative genomics.</title>
        <authorList>
            <person name="Stein L.D."/>
            <person name="Bao Z."/>
            <person name="Blasiar D."/>
            <person name="Blumenthal T."/>
            <person name="Brent M.R."/>
            <person name="Chen N."/>
            <person name="Chinwalla A."/>
            <person name="Clarke L."/>
            <person name="Clee C."/>
            <person name="Coghlan A."/>
            <person name="Coulson A."/>
            <person name="D'Eustachio P."/>
            <person name="Fitch D.H.A."/>
            <person name="Fulton L.A."/>
            <person name="Fulton R.E."/>
            <person name="Griffiths-Jones S."/>
            <person name="Harris T.W."/>
            <person name="Hillier L.W."/>
            <person name="Kamath R."/>
            <person name="Kuwabara P.E."/>
            <person name="Mardis E.R."/>
            <person name="Marra M.A."/>
            <person name="Miner T.L."/>
            <person name="Minx P."/>
            <person name="Mullikin J.C."/>
            <person name="Plumb R.W."/>
            <person name="Rogers J."/>
            <person name="Schein J.E."/>
            <person name="Sohrmann M."/>
            <person name="Spieth J."/>
            <person name="Stajich J.E."/>
            <person name="Wei C."/>
            <person name="Willey D."/>
            <person name="Wilson R.K."/>
            <person name="Durbin R.M."/>
            <person name="Waterston R.H."/>
        </authorList>
    </citation>
    <scope>NUCLEOTIDE SEQUENCE [LARGE SCALE GENOMIC DNA]</scope>
    <source>
        <strain>AF16</strain>
    </source>
</reference>
<comment type="function">
    <text evidence="1">Catalyzes the oxidative ring opening of 3-hydroxyanthranilate to 2-amino-3-carboxymuconate semialdehyde, which spontaneously cyclizes to quinolinate.</text>
</comment>
<comment type="catalytic activity">
    <reaction evidence="1">
        <text>3-hydroxyanthranilate + O2 = (2Z,4Z)-2-amino-3-carboxymuconate 6-semialdehyde</text>
        <dbReference type="Rhea" id="RHEA:17953"/>
        <dbReference type="ChEBI" id="CHEBI:15379"/>
        <dbReference type="ChEBI" id="CHEBI:36559"/>
        <dbReference type="ChEBI" id="CHEBI:77612"/>
        <dbReference type="EC" id="1.13.11.6"/>
    </reaction>
</comment>
<comment type="cofactor">
    <cofactor evidence="1">
        <name>Fe(2+)</name>
        <dbReference type="ChEBI" id="CHEBI:29033"/>
    </cofactor>
</comment>
<comment type="pathway">
    <text evidence="1">Cofactor biosynthesis; NAD(+) biosynthesis; quinolinate from L-kynurenine: step 3/3.</text>
</comment>
<comment type="subcellular location">
    <subcellularLocation>
        <location evidence="1">Cytoplasm</location>
    </subcellularLocation>
</comment>
<comment type="similarity">
    <text evidence="1">Belongs to the 3-HAO family.</text>
</comment>
<organism>
    <name type="scientific">Caenorhabditis briggsae</name>
    <dbReference type="NCBI Taxonomy" id="6238"/>
    <lineage>
        <taxon>Eukaryota</taxon>
        <taxon>Metazoa</taxon>
        <taxon>Ecdysozoa</taxon>
        <taxon>Nematoda</taxon>
        <taxon>Chromadorea</taxon>
        <taxon>Rhabditida</taxon>
        <taxon>Rhabditina</taxon>
        <taxon>Rhabditomorpha</taxon>
        <taxon>Rhabditoidea</taxon>
        <taxon>Rhabditidae</taxon>
        <taxon>Peloderinae</taxon>
        <taxon>Caenorhabditis</taxon>
    </lineage>
</organism>
<feature type="chain" id="PRO_0000245469" description="3-hydroxyanthranilate 3,4-dioxygenase">
    <location>
        <begin position="1"/>
        <end position="281"/>
    </location>
</feature>
<feature type="region of interest" description="Domain A (catalytic)" evidence="1">
    <location>
        <begin position="1"/>
        <end position="162"/>
    </location>
</feature>
<feature type="region of interest" description="Linker" evidence="1">
    <location>
        <begin position="163"/>
        <end position="179"/>
    </location>
</feature>
<feature type="region of interest" description="Domain B" evidence="1">
    <location>
        <begin position="180"/>
        <end position="281"/>
    </location>
</feature>
<feature type="binding site" evidence="1">
    <location>
        <position position="45"/>
    </location>
    <ligand>
        <name>O2</name>
        <dbReference type="ChEBI" id="CHEBI:15379"/>
    </ligand>
</feature>
<feature type="binding site" evidence="1">
    <location>
        <position position="49"/>
    </location>
    <ligand>
        <name>Fe cation</name>
        <dbReference type="ChEBI" id="CHEBI:24875"/>
        <note>catalytic</note>
    </ligand>
</feature>
<feature type="binding site" evidence="1">
    <location>
        <position position="55"/>
    </location>
    <ligand>
        <name>Fe cation</name>
        <dbReference type="ChEBI" id="CHEBI:24875"/>
        <note>catalytic</note>
    </ligand>
</feature>
<feature type="binding site" evidence="1">
    <location>
        <position position="55"/>
    </location>
    <ligand>
        <name>substrate</name>
    </ligand>
</feature>
<feature type="binding site" evidence="1">
    <location>
        <position position="93"/>
    </location>
    <ligand>
        <name>Fe cation</name>
        <dbReference type="ChEBI" id="CHEBI:24875"/>
        <note>catalytic</note>
    </ligand>
</feature>
<feature type="binding site" evidence="1">
    <location>
        <position position="97"/>
    </location>
    <ligand>
        <name>substrate</name>
    </ligand>
</feature>
<feature type="binding site" evidence="1">
    <location>
        <position position="107"/>
    </location>
    <ligand>
        <name>substrate</name>
    </ligand>
</feature>
<dbReference type="EC" id="1.13.11.6" evidence="1"/>
<dbReference type="EMBL" id="HE601047">
    <property type="protein sequence ID" value="CAP36564.3"/>
    <property type="molecule type" value="Genomic_DNA"/>
</dbReference>
<dbReference type="SMR" id="Q60W34"/>
<dbReference type="FunCoup" id="Q60W34">
    <property type="interactions" value="249"/>
</dbReference>
<dbReference type="STRING" id="6238.Q60W34"/>
<dbReference type="EnsemblMetazoa" id="CBG19288.1">
    <property type="protein sequence ID" value="CBG19288.1"/>
    <property type="gene ID" value="WBGene00038535"/>
</dbReference>
<dbReference type="WormBase" id="CBG19288">
    <property type="protein sequence ID" value="CBP37579"/>
    <property type="gene ID" value="WBGene00038535"/>
    <property type="gene designation" value="Cbr-haao-1"/>
</dbReference>
<dbReference type="eggNOG" id="KOG3995">
    <property type="taxonomic scope" value="Eukaryota"/>
</dbReference>
<dbReference type="HOGENOM" id="CLU_064845_0_0_1"/>
<dbReference type="InParanoid" id="Q60W34"/>
<dbReference type="OMA" id="GAPEYKT"/>
<dbReference type="UniPathway" id="UPA00253">
    <property type="reaction ID" value="UER00330"/>
</dbReference>
<dbReference type="Proteomes" id="UP000008549">
    <property type="component" value="Unassembled WGS sequence"/>
</dbReference>
<dbReference type="GO" id="GO:0005737">
    <property type="term" value="C:cytoplasm"/>
    <property type="evidence" value="ECO:0000318"/>
    <property type="project" value="GO_Central"/>
</dbReference>
<dbReference type="GO" id="GO:0000334">
    <property type="term" value="F:3-hydroxyanthranilate 3,4-dioxygenase activity"/>
    <property type="evidence" value="ECO:0000318"/>
    <property type="project" value="GO_Central"/>
</dbReference>
<dbReference type="GO" id="GO:0008198">
    <property type="term" value="F:ferrous iron binding"/>
    <property type="evidence" value="ECO:0007669"/>
    <property type="project" value="UniProtKB-UniRule"/>
</dbReference>
<dbReference type="GO" id="GO:0034354">
    <property type="term" value="P:'de novo' NAD biosynthetic process from L-tryptophan"/>
    <property type="evidence" value="ECO:0000318"/>
    <property type="project" value="GO_Central"/>
</dbReference>
<dbReference type="GO" id="GO:0043420">
    <property type="term" value="P:anthranilate metabolic process"/>
    <property type="evidence" value="ECO:0007669"/>
    <property type="project" value="UniProtKB-UniRule"/>
</dbReference>
<dbReference type="GO" id="GO:0006569">
    <property type="term" value="P:L-tryptophan catabolic process"/>
    <property type="evidence" value="ECO:0007669"/>
    <property type="project" value="UniProtKB-UniRule"/>
</dbReference>
<dbReference type="GO" id="GO:0019805">
    <property type="term" value="P:quinolinate biosynthetic process"/>
    <property type="evidence" value="ECO:0007669"/>
    <property type="project" value="UniProtKB-UniRule"/>
</dbReference>
<dbReference type="GO" id="GO:0046874">
    <property type="term" value="P:quinolinate metabolic process"/>
    <property type="evidence" value="ECO:0000318"/>
    <property type="project" value="GO_Central"/>
</dbReference>
<dbReference type="CDD" id="cd06123">
    <property type="entry name" value="cupin_HAO"/>
    <property type="match status" value="1"/>
</dbReference>
<dbReference type="FunFam" id="2.60.120.10:FF:000258">
    <property type="entry name" value="3-hydroxyanthranilate 3,4-dioxygenase"/>
    <property type="match status" value="1"/>
</dbReference>
<dbReference type="Gene3D" id="2.60.120.10">
    <property type="entry name" value="Jelly Rolls"/>
    <property type="match status" value="1"/>
</dbReference>
<dbReference type="HAMAP" id="MF_00825">
    <property type="entry name" value="3_HAO"/>
    <property type="match status" value="1"/>
</dbReference>
<dbReference type="InterPro" id="IPR010329">
    <property type="entry name" value="3hydroanth_dOase"/>
</dbReference>
<dbReference type="InterPro" id="IPR016700">
    <property type="entry name" value="3hydroanth_dOase_met"/>
</dbReference>
<dbReference type="InterPro" id="IPR014710">
    <property type="entry name" value="RmlC-like_jellyroll"/>
</dbReference>
<dbReference type="InterPro" id="IPR011051">
    <property type="entry name" value="RmlC_Cupin_sf"/>
</dbReference>
<dbReference type="NCBIfam" id="TIGR03037">
    <property type="entry name" value="anthran_nbaC"/>
    <property type="match status" value="1"/>
</dbReference>
<dbReference type="PANTHER" id="PTHR15497">
    <property type="entry name" value="3-HYDROXYANTHRANILATE 3,4-DIOXYGENASE"/>
    <property type="match status" value="1"/>
</dbReference>
<dbReference type="PANTHER" id="PTHR15497:SF1">
    <property type="entry name" value="3-HYDROXYANTHRANILATE 3,4-DIOXYGENASE"/>
    <property type="match status" value="1"/>
</dbReference>
<dbReference type="Pfam" id="PF06052">
    <property type="entry name" value="3-HAO"/>
    <property type="match status" value="1"/>
</dbReference>
<dbReference type="PIRSF" id="PIRSF017681">
    <property type="entry name" value="3hydroanth_dOase_animal"/>
    <property type="match status" value="1"/>
</dbReference>
<dbReference type="SUPFAM" id="SSF51182">
    <property type="entry name" value="RmlC-like cupins"/>
    <property type="match status" value="1"/>
</dbReference>
<sequence length="281" mass="32044">MAGVTAIEIPQWIQDNQGDFVPPVCNKCMFSDQLKVFYVGGPNQRKDFHLEEGEEFFFQRKGDMVLKVIEKGQVRDLVIKQGEMFMLPARVEHSPQRFANSIGLVVERERKNTEFDCVRFLVGSSNVTLFERWFFLTDVVKDLPPLIKEFYNSNEFKTGKPGKGTFACNAPYEARWTDLPVPINRKEFIYDHISEVKNGPVKIYGAPEYKTEVMLLGEGSYDLEAGAVELIIWLQENTFAVVEESGFTYALKSETMVRIKPNTKCLLNVKGGFAITIRMPG</sequence>
<gene>
    <name type="primary">haao-1</name>
    <name type="ORF">CBG19288</name>
</gene>
<keyword id="KW-0963">Cytoplasm</keyword>
<keyword id="KW-0223">Dioxygenase</keyword>
<keyword id="KW-0408">Iron</keyword>
<keyword id="KW-0479">Metal-binding</keyword>
<keyword id="KW-0560">Oxidoreductase</keyword>
<keyword id="KW-0662">Pyridine nucleotide biosynthesis</keyword>
<keyword id="KW-1185">Reference proteome</keyword>
<proteinExistence type="inferred from homology"/>